<evidence type="ECO:0000250" key="1"/>
<evidence type="ECO:0000305" key="2"/>
<accession>Q9ZCZ8</accession>
<comment type="function">
    <text evidence="1">One of the essential components for the initiation of protein synthesis. Protects formylmethionyl-tRNA from spontaneous hydrolysis and promotes its binding to the 30S ribosomal subunits. Also involved in the hydrolysis of GTP during the formation of the 70S ribosomal complex (By similarity).</text>
</comment>
<comment type="subcellular location">
    <subcellularLocation>
        <location evidence="1">Cytoplasm</location>
    </subcellularLocation>
</comment>
<comment type="similarity">
    <text evidence="2">Belongs to the TRAFAC class translation factor GTPase superfamily. Classic translation factor GTPase family. IF-2 subfamily.</text>
</comment>
<feature type="chain" id="PRO_0000137244" description="Translation initiation factor IF-2">
    <location>
        <begin position="1"/>
        <end position="831"/>
    </location>
</feature>
<feature type="domain" description="tr-type G">
    <location>
        <begin position="329"/>
        <end position="499"/>
    </location>
</feature>
<feature type="region of interest" description="G1" evidence="1">
    <location>
        <begin position="338"/>
        <end position="345"/>
    </location>
</feature>
<feature type="region of interest" description="G2" evidence="1">
    <location>
        <begin position="363"/>
        <end position="367"/>
    </location>
</feature>
<feature type="region of interest" description="G3" evidence="1">
    <location>
        <begin position="385"/>
        <end position="388"/>
    </location>
</feature>
<feature type="region of interest" description="G4" evidence="1">
    <location>
        <begin position="439"/>
        <end position="442"/>
    </location>
</feature>
<feature type="region of interest" description="G5" evidence="1">
    <location>
        <begin position="475"/>
        <end position="477"/>
    </location>
</feature>
<feature type="binding site" evidence="1">
    <location>
        <begin position="338"/>
        <end position="345"/>
    </location>
    <ligand>
        <name>GTP</name>
        <dbReference type="ChEBI" id="CHEBI:37565"/>
    </ligand>
</feature>
<feature type="binding site" evidence="1">
    <location>
        <begin position="385"/>
        <end position="389"/>
    </location>
    <ligand>
        <name>GTP</name>
        <dbReference type="ChEBI" id="CHEBI:37565"/>
    </ligand>
</feature>
<feature type="binding site" evidence="1">
    <location>
        <begin position="439"/>
        <end position="442"/>
    </location>
    <ligand>
        <name>GTP</name>
        <dbReference type="ChEBI" id="CHEBI:37565"/>
    </ligand>
</feature>
<proteinExistence type="inferred from homology"/>
<protein>
    <recommendedName>
        <fullName>Translation initiation factor IF-2</fullName>
    </recommendedName>
</protein>
<sequence length="831" mass="91275">MTDNQEIKPKKLTLGNSKLLLNKSFDSLTGAQSFVNAKSKTLVEVRKSSIGSTTTISLNKERNSLDQSVIDSNKEEFNRRLSILKKAAEQSKLHDPAQISTLSKLASINQSINSKNEQSITDKAVEQKHQNIEDNKVEIAAKIVQDNENISSQIPKKKKETLAKSVLVGMRTRYGIEEEPALEKTVDNKVVVPKIKLEESKKFKKADLFNMLSDDENGSGRTRSLASIKRAREKEKRKLVSQVPEKVYREVTIPEVIGVGDLANAMSERVADVIKELMKLGILANASQTIDADTAELVATNLGHTVTRVQESDVENILINDDKVEDLRTRAPVVTVMGHVDHGKTSLLDALKSTDIAAGELGGITQHIGAYRVTLADSKAITFIDTPGHEAFSEMRSRGAKVTDIVIIVVAADDGIKTQTVEAINHAKAAGVPIIVAINKIDKPDIDIERIKNELYVHEIIGEEAGGDVIFIPISALKKINLDKLEEAILLISEMQDLKASPFGLASGVVIESKIEKGRGTLTTILVQRGTLRNGDIIIAGTSYGKVKKMINDKGREILEATPSVPVEIQGLNEVPFAGDQFNVVQNEKQAKDIAEYRIRLAKEKKISVASRSSLEELLLKASGNSKIKELPLIIKCDVQGSIEAISGSLLKLPSDEIKLRILHSGVGPITESDVSLAHVSSAIVVGFNVRAWANALTAAEKTKVDIRYYSIIYNLIDDVKAIMSGMLEPIVREQYIGSVEIRQIFNITKIGKIAGSYVTKGIIKKGAGVRLLRDNVVIHAGKLKTLKRFKDEVKEVREGYECGIAFENYEDIREGDTVEVFELVQEQRQL</sequence>
<reference key="1">
    <citation type="journal article" date="1998" name="Nature">
        <title>The genome sequence of Rickettsia prowazekii and the origin of mitochondria.</title>
        <authorList>
            <person name="Andersson S.G.E."/>
            <person name="Zomorodipour A."/>
            <person name="Andersson J.O."/>
            <person name="Sicheritz-Ponten T."/>
            <person name="Alsmark U.C.M."/>
            <person name="Podowski R.M."/>
            <person name="Naeslund A.K."/>
            <person name="Eriksson A.-S."/>
            <person name="Winkler H.H."/>
            <person name="Kurland C.G."/>
        </authorList>
    </citation>
    <scope>NUCLEOTIDE SEQUENCE [LARGE SCALE GENOMIC DNA]</scope>
    <source>
        <strain>Madrid E</strain>
    </source>
</reference>
<organism>
    <name type="scientific">Rickettsia prowazekii (strain Madrid E)</name>
    <dbReference type="NCBI Taxonomy" id="272947"/>
    <lineage>
        <taxon>Bacteria</taxon>
        <taxon>Pseudomonadati</taxon>
        <taxon>Pseudomonadota</taxon>
        <taxon>Alphaproteobacteria</taxon>
        <taxon>Rickettsiales</taxon>
        <taxon>Rickettsiaceae</taxon>
        <taxon>Rickettsieae</taxon>
        <taxon>Rickettsia</taxon>
        <taxon>typhus group</taxon>
    </lineage>
</organism>
<keyword id="KW-0963">Cytoplasm</keyword>
<keyword id="KW-0342">GTP-binding</keyword>
<keyword id="KW-0396">Initiation factor</keyword>
<keyword id="KW-0547">Nucleotide-binding</keyword>
<keyword id="KW-0648">Protein biosynthesis</keyword>
<keyword id="KW-1185">Reference proteome</keyword>
<gene>
    <name type="primary">infB</name>
    <name type="ordered locus">RP552</name>
</gene>
<name>IF2_RICPR</name>
<dbReference type="EMBL" id="AJ235272">
    <property type="protein sequence ID" value="CAA15001.1"/>
    <property type="molecule type" value="Genomic_DNA"/>
</dbReference>
<dbReference type="PIR" id="G71659">
    <property type="entry name" value="G71659"/>
</dbReference>
<dbReference type="RefSeq" id="NP_220924.1">
    <property type="nucleotide sequence ID" value="NC_000963.1"/>
</dbReference>
<dbReference type="RefSeq" id="WP_004599046.1">
    <property type="nucleotide sequence ID" value="NC_000963.1"/>
</dbReference>
<dbReference type="SMR" id="Q9ZCZ8"/>
<dbReference type="STRING" id="272947.gene:17555632"/>
<dbReference type="EnsemblBacteria" id="CAA15001">
    <property type="protein sequence ID" value="CAA15001"/>
    <property type="gene ID" value="CAA15001"/>
</dbReference>
<dbReference type="GeneID" id="57569675"/>
<dbReference type="KEGG" id="rpr:RP552"/>
<dbReference type="PATRIC" id="fig|272947.5.peg.565"/>
<dbReference type="eggNOG" id="COG0532">
    <property type="taxonomic scope" value="Bacteria"/>
</dbReference>
<dbReference type="HOGENOM" id="CLU_006301_10_2_5"/>
<dbReference type="OrthoDB" id="9811804at2"/>
<dbReference type="Proteomes" id="UP000002480">
    <property type="component" value="Chromosome"/>
</dbReference>
<dbReference type="GO" id="GO:0005737">
    <property type="term" value="C:cytoplasm"/>
    <property type="evidence" value="ECO:0007669"/>
    <property type="project" value="UniProtKB-SubCell"/>
</dbReference>
<dbReference type="GO" id="GO:0005525">
    <property type="term" value="F:GTP binding"/>
    <property type="evidence" value="ECO:0007669"/>
    <property type="project" value="UniProtKB-KW"/>
</dbReference>
<dbReference type="GO" id="GO:0003924">
    <property type="term" value="F:GTPase activity"/>
    <property type="evidence" value="ECO:0007669"/>
    <property type="project" value="UniProtKB-UniRule"/>
</dbReference>
<dbReference type="GO" id="GO:0097216">
    <property type="term" value="F:guanosine tetraphosphate binding"/>
    <property type="evidence" value="ECO:0007669"/>
    <property type="project" value="UniProtKB-ARBA"/>
</dbReference>
<dbReference type="GO" id="GO:0003743">
    <property type="term" value="F:translation initiation factor activity"/>
    <property type="evidence" value="ECO:0007669"/>
    <property type="project" value="UniProtKB-UniRule"/>
</dbReference>
<dbReference type="CDD" id="cd01887">
    <property type="entry name" value="IF2_eIF5B"/>
    <property type="match status" value="1"/>
</dbReference>
<dbReference type="CDD" id="cd03702">
    <property type="entry name" value="IF2_mtIF2_II"/>
    <property type="match status" value="1"/>
</dbReference>
<dbReference type="CDD" id="cd03692">
    <property type="entry name" value="mtIF2_IVc"/>
    <property type="match status" value="1"/>
</dbReference>
<dbReference type="FunFam" id="2.40.30.10:FF:000008">
    <property type="entry name" value="Translation initiation factor IF-2"/>
    <property type="match status" value="1"/>
</dbReference>
<dbReference type="FunFam" id="2.40.30.10:FF:000054">
    <property type="entry name" value="Translation initiation factor IF-2"/>
    <property type="match status" value="1"/>
</dbReference>
<dbReference type="FunFam" id="3.40.50.10050:FF:000001">
    <property type="entry name" value="Translation initiation factor IF-2"/>
    <property type="match status" value="1"/>
</dbReference>
<dbReference type="FunFam" id="3.40.50.300:FF:000019">
    <property type="entry name" value="Translation initiation factor IF-2"/>
    <property type="match status" value="1"/>
</dbReference>
<dbReference type="Gene3D" id="3.40.50.300">
    <property type="entry name" value="P-loop containing nucleotide triphosphate hydrolases"/>
    <property type="match status" value="1"/>
</dbReference>
<dbReference type="Gene3D" id="2.40.30.10">
    <property type="entry name" value="Translation factors"/>
    <property type="match status" value="2"/>
</dbReference>
<dbReference type="Gene3D" id="3.40.50.10050">
    <property type="entry name" value="Translation initiation factor IF- 2, domain 3"/>
    <property type="match status" value="1"/>
</dbReference>
<dbReference type="HAMAP" id="MF_00100_B">
    <property type="entry name" value="IF_2_B"/>
    <property type="match status" value="1"/>
</dbReference>
<dbReference type="InterPro" id="IPR053905">
    <property type="entry name" value="EF-G-like_DII"/>
</dbReference>
<dbReference type="InterPro" id="IPR004161">
    <property type="entry name" value="EFTu-like_2"/>
</dbReference>
<dbReference type="InterPro" id="IPR044145">
    <property type="entry name" value="IF2_II"/>
</dbReference>
<dbReference type="InterPro" id="IPR006847">
    <property type="entry name" value="IF2_N"/>
</dbReference>
<dbReference type="InterPro" id="IPR027417">
    <property type="entry name" value="P-loop_NTPase"/>
</dbReference>
<dbReference type="InterPro" id="IPR005225">
    <property type="entry name" value="Small_GTP-bd"/>
</dbReference>
<dbReference type="InterPro" id="IPR000795">
    <property type="entry name" value="T_Tr_GTP-bd_dom"/>
</dbReference>
<dbReference type="InterPro" id="IPR000178">
    <property type="entry name" value="TF_IF2_bacterial-like"/>
</dbReference>
<dbReference type="InterPro" id="IPR015760">
    <property type="entry name" value="TIF_IF2"/>
</dbReference>
<dbReference type="InterPro" id="IPR023115">
    <property type="entry name" value="TIF_IF2_dom3"/>
</dbReference>
<dbReference type="InterPro" id="IPR036925">
    <property type="entry name" value="TIF_IF2_dom3_sf"/>
</dbReference>
<dbReference type="InterPro" id="IPR009000">
    <property type="entry name" value="Transl_B-barrel_sf"/>
</dbReference>
<dbReference type="NCBIfam" id="TIGR00487">
    <property type="entry name" value="IF-2"/>
    <property type="match status" value="1"/>
</dbReference>
<dbReference type="NCBIfam" id="TIGR00231">
    <property type="entry name" value="small_GTP"/>
    <property type="match status" value="1"/>
</dbReference>
<dbReference type="PANTHER" id="PTHR43381:SF5">
    <property type="entry name" value="TR-TYPE G DOMAIN-CONTAINING PROTEIN"/>
    <property type="match status" value="1"/>
</dbReference>
<dbReference type="PANTHER" id="PTHR43381">
    <property type="entry name" value="TRANSLATION INITIATION FACTOR IF-2-RELATED"/>
    <property type="match status" value="1"/>
</dbReference>
<dbReference type="Pfam" id="PF22042">
    <property type="entry name" value="EF-G_D2"/>
    <property type="match status" value="1"/>
</dbReference>
<dbReference type="Pfam" id="PF00009">
    <property type="entry name" value="GTP_EFTU"/>
    <property type="match status" value="1"/>
</dbReference>
<dbReference type="Pfam" id="PF03144">
    <property type="entry name" value="GTP_EFTU_D2"/>
    <property type="match status" value="1"/>
</dbReference>
<dbReference type="Pfam" id="PF11987">
    <property type="entry name" value="IF-2"/>
    <property type="match status" value="1"/>
</dbReference>
<dbReference type="Pfam" id="PF04760">
    <property type="entry name" value="IF2_N"/>
    <property type="match status" value="1"/>
</dbReference>
<dbReference type="SUPFAM" id="SSF52156">
    <property type="entry name" value="Initiation factor IF2/eIF5b, domain 3"/>
    <property type="match status" value="1"/>
</dbReference>
<dbReference type="SUPFAM" id="SSF52540">
    <property type="entry name" value="P-loop containing nucleoside triphosphate hydrolases"/>
    <property type="match status" value="1"/>
</dbReference>
<dbReference type="SUPFAM" id="SSF50447">
    <property type="entry name" value="Translation proteins"/>
    <property type="match status" value="2"/>
</dbReference>
<dbReference type="PROSITE" id="PS51722">
    <property type="entry name" value="G_TR_2"/>
    <property type="match status" value="1"/>
</dbReference>
<dbReference type="PROSITE" id="PS01176">
    <property type="entry name" value="IF2"/>
    <property type="match status" value="1"/>
</dbReference>